<name>ARPB_PSEPU</name>
<proteinExistence type="evidence at transcript level"/>
<reference key="1">
    <citation type="journal article" date="2001" name="Microbiology">
        <title>Identification and molecular characterization of an efflux system involved in Pseudomonas putida S12 multidrug resistance.</title>
        <authorList>
            <person name="Kieboom J."/>
            <person name="de Bont J.A.M."/>
        </authorList>
    </citation>
    <scope>NUCLEOTIDE SEQUENCE [GENOMIC DNA]</scope>
    <scope>EFFLUX PUMP SUBSTRATES</scope>
    <scope>INDUCTION</scope>
    <source>
        <strain>ATCC 700801 / S12</strain>
    </source>
</reference>
<sequence length="1050" mass="112794">MSKFFIDRPIFAWVIALVIMLVGALSILKLPINQYPSIAPPAIAIAVTYPGASAQTVQDTVVQVIEQQLNGIDNLRYVSSESNSDGSMTITATFEQGTNPDTAQVQVQNKLNLATPLLPQEVQQQGIRVTKAVKNFLLVIGLVSEDGSMTKDDLANYIVSNMQDPISRTAGVGDFQVFGAQYAMRIWLDPAKLNKFQLTPVDVKTAVAAQNVQVSSGQLGGLPALPGTQLNATIIGKTRLQTAEQFESILLKVNKDGSQVRLGDVAQVGLGGENYAVSAQFNGKPASGLAVKLATGANALDTAKALRETIKGLEPFFPPGVKAVFPYDTTPVVTESISGVIHTLIEAVVLVFLVMYLFLQNFRATIITTMTVPVVLLGTFGILAAAGFSINTLTMFAMVLAIGLLVDDAIVVVENVERVMSEEGLPPKEATKRSMEQIQGALVGIALVLSAVLLPMAFFGGSTGVIYRQFSITIVSAMGLSVLVALIFTPALCATMLKPLKKGEHHTAKGGFFGWFNRNFDRSVNGYERSVGTILRNKVPFLLGYALIVVGMIWLFARIPTAFLPEEDQGVLFAQVQTPAGSSAERTQVVVDQMREYLLKDEADTVSSVFTVNGFNFAGRGQSSGMAFIMLKPWDERSKENSVFALAQRAQQHFFTFRDAMVFAFAPPAVLELGNATGFDVFLQDRGGVGHAKLMEARNQFLAKAAQSKILSAVRPNGLNDEPQYQLTIDDERASALGVTIADINNTLSIALGASYVNDFIDRGRVKKVYIQGEPSARMSPEDLQKWYVRNGAGEMVPFSSFAKGEWTYGSPKLSRYNGVEAMEILGAPAPGYSTGEAMAEVERIAGELPSGIGFSWTGMSYEEKLSGSQMPALFALSVLFVFLCLAALYESWSIPIAVVLVVPLGIIGALIATSLRGLSNDVYFLVGLLTTIGLAAKNAILIVEFAKELHEQGRSLYDAAIEACRMRLRPIIMTSLAFILGVVPLTIASGAGAGSQHAIGTGVIGGMISATVLAIFWVPLFFVAVSSLFGSKEPEKDVTPENPRYEAGQ</sequence>
<comment type="function">
    <text>The inner membrane transporter component of an antibiotic efflux pump. Confers resistance to numerous structurally unrelated antibiotics such as carbenicillin, chloramphenicol, erythromycin, novobiocin, streptomycin and tetracycline. Is not involved in organic solvent efflux.</text>
</comment>
<comment type="subcellular location">
    <subcellularLocation>
        <location evidence="3">Cell inner membrane</location>
        <topology evidence="3">Multi-pass membrane protein</topology>
    </subcellularLocation>
</comment>
<comment type="induction">
    <text evidence="2">The arpABC operon was not seen to be induced by carbenicillin, chloramphenicol, erythromycin nor by hexane, toluene or p-xylene.</text>
</comment>
<comment type="similarity">
    <text evidence="3">Belongs to the resistance-nodulation-cell division (RND) (TC 2.A.6) family.</text>
</comment>
<comment type="caution">
    <text evidence="3">Despite being nearly identical to the ttgABC operon in strain DOT-T1E and the mepABC operon in strain KT2442-TOL this operon does not function in solvent efflux. This may be due to different protein expression levels. In strain KT2440 the equivalent operon does not seem to function in toluene efflux.</text>
</comment>
<organism>
    <name type="scientific">Pseudomonas putida</name>
    <name type="common">Arthrobacter siderocapsulatus</name>
    <dbReference type="NCBI Taxonomy" id="303"/>
    <lineage>
        <taxon>Bacteria</taxon>
        <taxon>Pseudomonadati</taxon>
        <taxon>Pseudomonadota</taxon>
        <taxon>Gammaproteobacteria</taxon>
        <taxon>Pseudomonadales</taxon>
        <taxon>Pseudomonadaceae</taxon>
        <taxon>Pseudomonas</taxon>
    </lineage>
</organism>
<protein>
    <recommendedName>
        <fullName>Antibiotic efflux pump membrane transporter ArpB</fullName>
    </recommendedName>
</protein>
<accession>Q9KJC2</accession>
<dbReference type="EMBL" id="AF183959">
    <property type="protein sequence ID" value="AAF73832.1"/>
    <property type="molecule type" value="Genomic_DNA"/>
</dbReference>
<dbReference type="SMR" id="Q9KJC2"/>
<dbReference type="TCDB" id="2.A.6.2.8">
    <property type="family name" value="the resistance-nodulation-cell division (rnd) superfamily"/>
</dbReference>
<dbReference type="eggNOG" id="COG0841">
    <property type="taxonomic scope" value="Bacteria"/>
</dbReference>
<dbReference type="GO" id="GO:0005886">
    <property type="term" value="C:plasma membrane"/>
    <property type="evidence" value="ECO:0007669"/>
    <property type="project" value="UniProtKB-SubCell"/>
</dbReference>
<dbReference type="GO" id="GO:0015562">
    <property type="term" value="F:efflux transmembrane transporter activity"/>
    <property type="evidence" value="ECO:0007669"/>
    <property type="project" value="InterPro"/>
</dbReference>
<dbReference type="GO" id="GO:0042910">
    <property type="term" value="F:xenobiotic transmembrane transporter activity"/>
    <property type="evidence" value="ECO:0007669"/>
    <property type="project" value="TreeGrafter"/>
</dbReference>
<dbReference type="GO" id="GO:0046677">
    <property type="term" value="P:response to antibiotic"/>
    <property type="evidence" value="ECO:0007669"/>
    <property type="project" value="UniProtKB-KW"/>
</dbReference>
<dbReference type="FunFam" id="1.20.1640.10:FF:000001">
    <property type="entry name" value="Efflux pump membrane transporter"/>
    <property type="match status" value="1"/>
</dbReference>
<dbReference type="FunFam" id="3.30.2090.10:FF:000001">
    <property type="entry name" value="Efflux pump membrane transporter"/>
    <property type="match status" value="1"/>
</dbReference>
<dbReference type="FunFam" id="3.30.2090.10:FF:000002">
    <property type="entry name" value="Efflux pump membrane transporter"/>
    <property type="match status" value="1"/>
</dbReference>
<dbReference type="FunFam" id="3.30.70.1430:FF:000001">
    <property type="entry name" value="Efflux pump membrane transporter"/>
    <property type="match status" value="1"/>
</dbReference>
<dbReference type="FunFam" id="3.30.70.1430:FF:000002">
    <property type="entry name" value="Efflux pump membrane transporter"/>
    <property type="match status" value="1"/>
</dbReference>
<dbReference type="Gene3D" id="3.30.70.1430">
    <property type="entry name" value="Multidrug efflux transporter AcrB pore domain"/>
    <property type="match status" value="2"/>
</dbReference>
<dbReference type="Gene3D" id="3.30.70.1440">
    <property type="entry name" value="Multidrug efflux transporter AcrB pore domain"/>
    <property type="match status" value="1"/>
</dbReference>
<dbReference type="Gene3D" id="3.30.70.1320">
    <property type="entry name" value="Multidrug efflux transporter AcrB pore domain like"/>
    <property type="match status" value="1"/>
</dbReference>
<dbReference type="Gene3D" id="3.30.2090.10">
    <property type="entry name" value="Multidrug efflux transporter AcrB TolC docking domain, DN and DC subdomains"/>
    <property type="match status" value="2"/>
</dbReference>
<dbReference type="Gene3D" id="1.20.1640.10">
    <property type="entry name" value="Multidrug efflux transporter AcrB transmembrane domain"/>
    <property type="match status" value="2"/>
</dbReference>
<dbReference type="InterPro" id="IPR027463">
    <property type="entry name" value="AcrB_DN_DC_subdom"/>
</dbReference>
<dbReference type="InterPro" id="IPR001036">
    <property type="entry name" value="Acrflvin-R"/>
</dbReference>
<dbReference type="InterPro" id="IPR004764">
    <property type="entry name" value="MdtF-like"/>
</dbReference>
<dbReference type="NCBIfam" id="TIGR00915">
    <property type="entry name" value="2A0602"/>
    <property type="match status" value="1"/>
</dbReference>
<dbReference type="NCBIfam" id="NF000282">
    <property type="entry name" value="RND_permease_1"/>
    <property type="match status" value="1"/>
</dbReference>
<dbReference type="PANTHER" id="PTHR32063">
    <property type="match status" value="1"/>
</dbReference>
<dbReference type="PANTHER" id="PTHR32063:SF13">
    <property type="entry name" value="MULTIDRUG EFFLUX PUMP SUBUNIT ACRB-RELATED"/>
    <property type="match status" value="1"/>
</dbReference>
<dbReference type="Pfam" id="PF00873">
    <property type="entry name" value="ACR_tran"/>
    <property type="match status" value="1"/>
</dbReference>
<dbReference type="PRINTS" id="PR00702">
    <property type="entry name" value="ACRIFLAVINRP"/>
</dbReference>
<dbReference type="SUPFAM" id="SSF82693">
    <property type="entry name" value="Multidrug efflux transporter AcrB pore domain, PN1, PN2, PC1 and PC2 subdomains"/>
    <property type="match status" value="4"/>
</dbReference>
<dbReference type="SUPFAM" id="SSF82714">
    <property type="entry name" value="Multidrug efflux transporter AcrB TolC docking domain, DN and DC subdomains"/>
    <property type="match status" value="2"/>
</dbReference>
<dbReference type="SUPFAM" id="SSF82866">
    <property type="entry name" value="Multidrug efflux transporter AcrB transmembrane domain"/>
    <property type="match status" value="2"/>
</dbReference>
<evidence type="ECO:0000255" key="1"/>
<evidence type="ECO:0000269" key="2">
    <source>
    </source>
</evidence>
<evidence type="ECO:0000305" key="3"/>
<gene>
    <name type="primary">arpB</name>
</gene>
<keyword id="KW-0046">Antibiotic resistance</keyword>
<keyword id="KW-0997">Cell inner membrane</keyword>
<keyword id="KW-1003">Cell membrane</keyword>
<keyword id="KW-0472">Membrane</keyword>
<keyword id="KW-0812">Transmembrane</keyword>
<keyword id="KW-1133">Transmembrane helix</keyword>
<keyword id="KW-0813">Transport</keyword>
<feature type="chain" id="PRO_0000161850" description="Antibiotic efflux pump membrane transporter ArpB">
    <location>
        <begin position="1"/>
        <end position="1050"/>
    </location>
</feature>
<feature type="transmembrane region" description="Helical" evidence="1">
    <location>
        <begin position="10"/>
        <end position="30"/>
    </location>
</feature>
<feature type="transmembrane region" description="Helical" evidence="1">
    <location>
        <begin position="339"/>
        <end position="359"/>
    </location>
</feature>
<feature type="transmembrane region" description="Helical" evidence="1">
    <location>
        <begin position="370"/>
        <end position="390"/>
    </location>
</feature>
<feature type="transmembrane region" description="Helical" evidence="1">
    <location>
        <begin position="393"/>
        <end position="413"/>
    </location>
</feature>
<feature type="transmembrane region" description="Helical" evidence="1">
    <location>
        <begin position="440"/>
        <end position="460"/>
    </location>
</feature>
<feature type="transmembrane region" description="Helical" evidence="1">
    <location>
        <begin position="472"/>
        <end position="492"/>
    </location>
</feature>
<feature type="transmembrane region" description="Helical" evidence="1">
    <location>
        <begin position="539"/>
        <end position="559"/>
    </location>
</feature>
<feature type="transmembrane region" description="Helical" evidence="1">
    <location>
        <begin position="871"/>
        <end position="891"/>
    </location>
</feature>
<feature type="transmembrane region" description="Helical" evidence="1">
    <location>
        <begin position="893"/>
        <end position="913"/>
    </location>
</feature>
<feature type="transmembrane region" description="Helical" evidence="1">
    <location>
        <begin position="923"/>
        <end position="943"/>
    </location>
</feature>
<feature type="transmembrane region" description="Helical" evidence="1">
    <location>
        <begin position="972"/>
        <end position="992"/>
    </location>
</feature>
<feature type="transmembrane region" description="Helical" evidence="1">
    <location>
        <begin position="1004"/>
        <end position="1024"/>
    </location>
</feature>